<protein>
    <recommendedName>
        <fullName>Serine/threonine-protein kinase PINK1, mitochondrial</fullName>
        <ecNumber evidence="10 12 15">2.7.11.1</ecNumber>
    </recommendedName>
    <alternativeName>
        <fullName>BRPK</fullName>
    </alternativeName>
    <alternativeName>
        <fullName>PTEN-induced putative kinase protein 1</fullName>
    </alternativeName>
</protein>
<dbReference type="EC" id="2.7.11.1" evidence="10 12 15"/>
<dbReference type="EMBL" id="AB053476">
    <property type="protein sequence ID" value="BAB55651.1"/>
    <property type="molecule type" value="mRNA"/>
</dbReference>
<dbReference type="EMBL" id="AF316872">
    <property type="protein sequence ID" value="AAK28061.1"/>
    <property type="molecule type" value="mRNA"/>
</dbReference>
<dbReference type="EMBL" id="AL807249">
    <property type="status" value="NOT_ANNOTATED_CDS"/>
    <property type="molecule type" value="Genomic_DNA"/>
</dbReference>
<dbReference type="EMBL" id="BC044743">
    <property type="protein sequence ID" value="AAH44743.1"/>
    <property type="molecule type" value="mRNA"/>
</dbReference>
<dbReference type="EMBL" id="BC054349">
    <property type="protein sequence ID" value="AAH54349.1"/>
    <property type="molecule type" value="mRNA"/>
</dbReference>
<dbReference type="EMBL" id="BC067066">
    <property type="protein sequence ID" value="AAH67066.1"/>
    <property type="molecule type" value="mRNA"/>
</dbReference>
<dbReference type="CCDS" id="CCDS18825.1"/>
<dbReference type="RefSeq" id="NP_081156.2">
    <property type="nucleotide sequence ID" value="NM_026880.2"/>
</dbReference>
<dbReference type="SMR" id="Q99MQ3"/>
<dbReference type="BioGRID" id="213129">
    <property type="interactions" value="2"/>
</dbReference>
<dbReference type="FunCoup" id="Q99MQ3">
    <property type="interactions" value="1060"/>
</dbReference>
<dbReference type="IntAct" id="Q99MQ3">
    <property type="interactions" value="5"/>
</dbReference>
<dbReference type="MINT" id="Q99MQ3"/>
<dbReference type="STRING" id="10090.ENSMUSP00000030536"/>
<dbReference type="ChEMBL" id="CHEMBL5465349"/>
<dbReference type="GlyGen" id="Q99MQ3">
    <property type="glycosylation" value="1 site, 1 N-linked glycan (1 site)"/>
</dbReference>
<dbReference type="iPTMnet" id="Q99MQ3"/>
<dbReference type="PhosphoSitePlus" id="Q99MQ3"/>
<dbReference type="PaxDb" id="10090-ENSMUSP00000030536"/>
<dbReference type="ProteomicsDB" id="287733"/>
<dbReference type="ABCD" id="Q99MQ3">
    <property type="antibodies" value="4 sequenced antibodies"/>
</dbReference>
<dbReference type="Antibodypedia" id="1105">
    <property type="antibodies" value="806 antibodies from 48 providers"/>
</dbReference>
<dbReference type="DNASU" id="68943"/>
<dbReference type="Ensembl" id="ENSMUST00000030536.13">
    <property type="protein sequence ID" value="ENSMUSP00000030536.7"/>
    <property type="gene ID" value="ENSMUSG00000028756.13"/>
</dbReference>
<dbReference type="GeneID" id="68943"/>
<dbReference type="KEGG" id="mmu:68943"/>
<dbReference type="UCSC" id="uc008vku.1">
    <property type="organism name" value="mouse"/>
</dbReference>
<dbReference type="AGR" id="MGI:1916193"/>
<dbReference type="CTD" id="65018"/>
<dbReference type="MGI" id="MGI:1916193">
    <property type="gene designation" value="Pink1"/>
</dbReference>
<dbReference type="VEuPathDB" id="HostDB:ENSMUSG00000028756"/>
<dbReference type="eggNOG" id="KOG4158">
    <property type="taxonomic scope" value="Eukaryota"/>
</dbReference>
<dbReference type="GeneTree" id="ENSGT00390000001206"/>
<dbReference type="InParanoid" id="Q99MQ3"/>
<dbReference type="OMA" id="TCCSLRN"/>
<dbReference type="OrthoDB" id="1405469at2759"/>
<dbReference type="PhylomeDB" id="Q99MQ3"/>
<dbReference type="TreeFam" id="TF313183"/>
<dbReference type="Reactome" id="R-MMU-5205685">
    <property type="pathway name" value="PINK1-PRKN Mediated Mitophagy"/>
</dbReference>
<dbReference type="BioGRID-ORCS" id="68943">
    <property type="hits" value="7 hits in 80 CRISPR screens"/>
</dbReference>
<dbReference type="ChiTaRS" id="Pink1">
    <property type="organism name" value="mouse"/>
</dbReference>
<dbReference type="PRO" id="PR:Q99MQ3"/>
<dbReference type="Proteomes" id="UP000000589">
    <property type="component" value="Chromosome 4"/>
</dbReference>
<dbReference type="RNAct" id="Q99MQ3">
    <property type="molecule type" value="protein"/>
</dbReference>
<dbReference type="Bgee" id="ENSMUSG00000028756">
    <property type="expression patterns" value="Expressed in hindlimb stylopod muscle and 252 other cell types or tissues"/>
</dbReference>
<dbReference type="ExpressionAtlas" id="Q99MQ3">
    <property type="expression patterns" value="baseline and differential"/>
</dbReference>
<dbReference type="GO" id="GO:0097449">
    <property type="term" value="C:astrocyte projection"/>
    <property type="evidence" value="ECO:0007669"/>
    <property type="project" value="Ensembl"/>
</dbReference>
<dbReference type="GO" id="GO:0044297">
    <property type="term" value="C:cell body"/>
    <property type="evidence" value="ECO:0007669"/>
    <property type="project" value="Ensembl"/>
</dbReference>
<dbReference type="GO" id="GO:0000785">
    <property type="term" value="C:chromatin"/>
    <property type="evidence" value="ECO:0007669"/>
    <property type="project" value="Ensembl"/>
</dbReference>
<dbReference type="GO" id="GO:0005856">
    <property type="term" value="C:cytoskeleton"/>
    <property type="evidence" value="ECO:0007669"/>
    <property type="project" value="Ensembl"/>
</dbReference>
<dbReference type="GO" id="GO:0005829">
    <property type="term" value="C:cytosol"/>
    <property type="evidence" value="ECO:0000250"/>
    <property type="project" value="UniProtKB"/>
</dbReference>
<dbReference type="GO" id="GO:0005783">
    <property type="term" value="C:endoplasmic reticulum"/>
    <property type="evidence" value="ECO:0000314"/>
    <property type="project" value="UniProtKB"/>
</dbReference>
<dbReference type="GO" id="GO:0030426">
    <property type="term" value="C:growth cone"/>
    <property type="evidence" value="ECO:0007669"/>
    <property type="project" value="Ensembl"/>
</dbReference>
<dbReference type="GO" id="GO:0005743">
    <property type="term" value="C:mitochondrial inner membrane"/>
    <property type="evidence" value="ECO:0000314"/>
    <property type="project" value="MGI"/>
</dbReference>
<dbReference type="GO" id="GO:0005758">
    <property type="term" value="C:mitochondrial intermembrane space"/>
    <property type="evidence" value="ECO:0007669"/>
    <property type="project" value="Ensembl"/>
</dbReference>
<dbReference type="GO" id="GO:0005741">
    <property type="term" value="C:mitochondrial outer membrane"/>
    <property type="evidence" value="ECO:0007669"/>
    <property type="project" value="UniProtKB-SubCell"/>
</dbReference>
<dbReference type="GO" id="GO:0005739">
    <property type="term" value="C:mitochondrion"/>
    <property type="evidence" value="ECO:0000314"/>
    <property type="project" value="UniProtKB"/>
</dbReference>
<dbReference type="GO" id="GO:0005634">
    <property type="term" value="C:nucleus"/>
    <property type="evidence" value="ECO:0007669"/>
    <property type="project" value="Ensembl"/>
</dbReference>
<dbReference type="GO" id="GO:0048471">
    <property type="term" value="C:perinuclear region of cytoplasm"/>
    <property type="evidence" value="ECO:0007669"/>
    <property type="project" value="Ensembl"/>
</dbReference>
<dbReference type="GO" id="GO:0005524">
    <property type="term" value="F:ATP binding"/>
    <property type="evidence" value="ECO:0000314"/>
    <property type="project" value="UniProtKB"/>
</dbReference>
<dbReference type="GO" id="GO:0055131">
    <property type="term" value="F:C3HC4-type RING finger domain binding"/>
    <property type="evidence" value="ECO:0007669"/>
    <property type="project" value="Ensembl"/>
</dbReference>
<dbReference type="GO" id="GO:0016301">
    <property type="term" value="F:kinase activity"/>
    <property type="evidence" value="ECO:0000314"/>
    <property type="project" value="MGI"/>
</dbReference>
<dbReference type="GO" id="GO:0000287">
    <property type="term" value="F:magnesium ion binding"/>
    <property type="evidence" value="ECO:0000314"/>
    <property type="project" value="UniProtKB"/>
</dbReference>
<dbReference type="GO" id="GO:0002020">
    <property type="term" value="F:protease binding"/>
    <property type="evidence" value="ECO:0007669"/>
    <property type="project" value="Ensembl"/>
</dbReference>
<dbReference type="GO" id="GO:0043422">
    <property type="term" value="F:protein kinase B binding"/>
    <property type="evidence" value="ECO:0007669"/>
    <property type="project" value="Ensembl"/>
</dbReference>
<dbReference type="GO" id="GO:0106310">
    <property type="term" value="F:protein serine kinase activity"/>
    <property type="evidence" value="ECO:0000315"/>
    <property type="project" value="UniProtKB"/>
</dbReference>
<dbReference type="GO" id="GO:0004674">
    <property type="term" value="F:protein serine/threonine kinase activity"/>
    <property type="evidence" value="ECO:0000314"/>
    <property type="project" value="UniProtKB"/>
</dbReference>
<dbReference type="GO" id="GO:0044877">
    <property type="term" value="F:protein-containing complex binding"/>
    <property type="evidence" value="ECO:0007669"/>
    <property type="project" value="Ensembl"/>
</dbReference>
<dbReference type="GO" id="GO:0031625">
    <property type="term" value="F:ubiquitin protein ligase binding"/>
    <property type="evidence" value="ECO:0007669"/>
    <property type="project" value="Ensembl"/>
</dbReference>
<dbReference type="GO" id="GO:0000422">
    <property type="term" value="P:autophagy of mitochondrion"/>
    <property type="evidence" value="ECO:0000250"/>
    <property type="project" value="UniProtKB"/>
</dbReference>
<dbReference type="GO" id="GO:0050432">
    <property type="term" value="P:catecholamine secretion"/>
    <property type="evidence" value="ECO:0000315"/>
    <property type="project" value="MGI"/>
</dbReference>
<dbReference type="GO" id="GO:1904881">
    <property type="term" value="P:cellular response to hydrogen sulfide"/>
    <property type="evidence" value="ECO:0007669"/>
    <property type="project" value="Ensembl"/>
</dbReference>
<dbReference type="GO" id="GO:0071456">
    <property type="term" value="P:cellular response to hypoxia"/>
    <property type="evidence" value="ECO:0000315"/>
    <property type="project" value="ParkinsonsUK-UCL"/>
</dbReference>
<dbReference type="GO" id="GO:0034599">
    <property type="term" value="P:cellular response to oxidative stress"/>
    <property type="evidence" value="ECO:0000315"/>
    <property type="project" value="ParkinsonsUK-UCL"/>
</dbReference>
<dbReference type="GO" id="GO:0097237">
    <property type="term" value="P:cellular response to toxic substance"/>
    <property type="evidence" value="ECO:0000315"/>
    <property type="project" value="BHF-UCL"/>
</dbReference>
<dbReference type="GO" id="GO:0014046">
    <property type="term" value="P:dopamine secretion"/>
    <property type="evidence" value="ECO:0000315"/>
    <property type="project" value="MGI"/>
</dbReference>
<dbReference type="GO" id="GO:0051649">
    <property type="term" value="P:establishment of localization in cell"/>
    <property type="evidence" value="ECO:0000315"/>
    <property type="project" value="MGI"/>
</dbReference>
<dbReference type="GO" id="GO:0072655">
    <property type="term" value="P:establishment of protein localization to mitochondrion"/>
    <property type="evidence" value="ECO:0007669"/>
    <property type="project" value="Ensembl"/>
</dbReference>
<dbReference type="GO" id="GO:0030097">
    <property type="term" value="P:hemopoiesis"/>
    <property type="evidence" value="ECO:0007669"/>
    <property type="project" value="Ensembl"/>
</dbReference>
<dbReference type="GO" id="GO:0035556">
    <property type="term" value="P:intracellular signal transduction"/>
    <property type="evidence" value="ECO:0000314"/>
    <property type="project" value="UniProtKB"/>
</dbReference>
<dbReference type="GO" id="GO:0072656">
    <property type="term" value="P:maintenance of protein location in mitochondrion"/>
    <property type="evidence" value="ECO:0007669"/>
    <property type="project" value="Ensembl"/>
</dbReference>
<dbReference type="GO" id="GO:0007005">
    <property type="term" value="P:mitochondrion organization"/>
    <property type="evidence" value="ECO:0007669"/>
    <property type="project" value="Ensembl"/>
</dbReference>
<dbReference type="GO" id="GO:0099074">
    <property type="term" value="P:mitochondrion to lysosome vesicle-mediated transport"/>
    <property type="evidence" value="ECO:0007669"/>
    <property type="project" value="Ensembl"/>
</dbReference>
<dbReference type="GO" id="GO:0000423">
    <property type="term" value="P:mitophagy"/>
    <property type="evidence" value="ECO:0007669"/>
    <property type="project" value="Ensembl"/>
</dbReference>
<dbReference type="GO" id="GO:1902902">
    <property type="term" value="P:negative regulation of autophagosome assembly"/>
    <property type="evidence" value="ECO:0007669"/>
    <property type="project" value="Ensembl"/>
</dbReference>
<dbReference type="GO" id="GO:0010629">
    <property type="term" value="P:negative regulation of gene expression"/>
    <property type="evidence" value="ECO:0000315"/>
    <property type="project" value="ParkinsonsUK-UCL"/>
</dbReference>
<dbReference type="GO" id="GO:1903384">
    <property type="term" value="P:negative regulation of hydrogen peroxide-induced neuron intrinsic apoptotic signaling pathway"/>
    <property type="evidence" value="ECO:0007669"/>
    <property type="project" value="Ensembl"/>
</dbReference>
<dbReference type="GO" id="GO:1903298">
    <property type="term" value="P:negative regulation of hypoxia-induced intrinsic apoptotic signaling pathway"/>
    <property type="evidence" value="ECO:0000315"/>
    <property type="project" value="ParkinsonsUK-UCL"/>
</dbReference>
<dbReference type="GO" id="GO:2001243">
    <property type="term" value="P:negative regulation of intrinsic apoptotic signaling pathway"/>
    <property type="evidence" value="ECO:0000250"/>
    <property type="project" value="UniProtKB"/>
</dbReference>
<dbReference type="GO" id="GO:0090258">
    <property type="term" value="P:negative regulation of mitochondrial fission"/>
    <property type="evidence" value="ECO:0007669"/>
    <property type="project" value="Ensembl"/>
</dbReference>
<dbReference type="GO" id="GO:1901525">
    <property type="term" value="P:negative regulation of mitophagy"/>
    <property type="evidence" value="ECO:0007669"/>
    <property type="project" value="Ensembl"/>
</dbReference>
<dbReference type="GO" id="GO:0043524">
    <property type="term" value="P:negative regulation of neuron apoptotic process"/>
    <property type="evidence" value="ECO:0000315"/>
    <property type="project" value="ParkinsonsUK-UCL"/>
</dbReference>
<dbReference type="GO" id="GO:2000378">
    <property type="term" value="P:negative regulation of reactive oxygen species metabolic process"/>
    <property type="evidence" value="ECO:0007669"/>
    <property type="project" value="Ensembl"/>
</dbReference>
<dbReference type="GO" id="GO:0043123">
    <property type="term" value="P:positive regulation of canonical NF-kappaB signal transduction"/>
    <property type="evidence" value="ECO:0007669"/>
    <property type="project" value="Ensembl"/>
</dbReference>
<dbReference type="GO" id="GO:0033605">
    <property type="term" value="P:positive regulation of catecholamine secretion"/>
    <property type="evidence" value="ECO:0000315"/>
    <property type="project" value="MGI"/>
</dbReference>
<dbReference type="GO" id="GO:0030335">
    <property type="term" value="P:positive regulation of cell migration"/>
    <property type="evidence" value="ECO:0007669"/>
    <property type="project" value="Ensembl"/>
</dbReference>
<dbReference type="GO" id="GO:1903852">
    <property type="term" value="P:positive regulation of cristae formation"/>
    <property type="evidence" value="ECO:0007669"/>
    <property type="project" value="Ensembl"/>
</dbReference>
<dbReference type="GO" id="GO:0033603">
    <property type="term" value="P:positive regulation of dopamine secretion"/>
    <property type="evidence" value="ECO:0000315"/>
    <property type="project" value="MGI"/>
</dbReference>
<dbReference type="GO" id="GO:1902958">
    <property type="term" value="P:positive regulation of mitochondrial electron transport, NADH to ubiquinone"/>
    <property type="evidence" value="ECO:0000315"/>
    <property type="project" value="MGI"/>
</dbReference>
<dbReference type="GO" id="GO:0090141">
    <property type="term" value="P:positive regulation of mitochondrial fission"/>
    <property type="evidence" value="ECO:0007669"/>
    <property type="project" value="Ensembl"/>
</dbReference>
<dbReference type="GO" id="GO:0051897">
    <property type="term" value="P:positive regulation of phosphatidylinositol 3-kinase/protein kinase B signal transduction"/>
    <property type="evidence" value="ECO:0007669"/>
    <property type="project" value="Ensembl"/>
</dbReference>
<dbReference type="GO" id="GO:0090200">
    <property type="term" value="P:positive regulation of release of cytochrome c from mitochondria"/>
    <property type="evidence" value="ECO:0007669"/>
    <property type="project" value="Ensembl"/>
</dbReference>
<dbReference type="GO" id="GO:0032226">
    <property type="term" value="P:positive regulation of synaptic transmission, dopaminergic"/>
    <property type="evidence" value="ECO:0000315"/>
    <property type="project" value="MGI"/>
</dbReference>
<dbReference type="GO" id="GO:0045944">
    <property type="term" value="P:positive regulation of transcription by RNA polymerase II"/>
    <property type="evidence" value="ECO:0000315"/>
    <property type="project" value="ParkinsonsUK-UCL"/>
</dbReference>
<dbReference type="GO" id="GO:0045727">
    <property type="term" value="P:positive regulation of translation"/>
    <property type="evidence" value="ECO:0000315"/>
    <property type="project" value="ParkinsonsUK-UCL"/>
</dbReference>
<dbReference type="GO" id="GO:1905091">
    <property type="term" value="P:positive regulation of type 2 mitophagy"/>
    <property type="evidence" value="ECO:0007669"/>
    <property type="project" value="Ensembl"/>
</dbReference>
<dbReference type="GO" id="GO:0006468">
    <property type="term" value="P:protein phosphorylation"/>
    <property type="evidence" value="ECO:0000314"/>
    <property type="project" value="UniProtKB"/>
</dbReference>
<dbReference type="GO" id="GO:0050821">
    <property type="term" value="P:protein stabilization"/>
    <property type="evidence" value="ECO:0000315"/>
    <property type="project" value="UniProtKB"/>
</dbReference>
<dbReference type="GO" id="GO:0016567">
    <property type="term" value="P:protein ubiquitination"/>
    <property type="evidence" value="ECO:0000250"/>
    <property type="project" value="UniProtKB"/>
</dbReference>
<dbReference type="GO" id="GO:1900407">
    <property type="term" value="P:regulation of cellular response to oxidative stress"/>
    <property type="evidence" value="ECO:0007669"/>
    <property type="project" value="Ensembl"/>
</dbReference>
<dbReference type="GO" id="GO:0010310">
    <property type="term" value="P:regulation of hydrogen peroxide metabolic process"/>
    <property type="evidence" value="ECO:0000315"/>
    <property type="project" value="ParkinsonsUK-UCL"/>
</dbReference>
<dbReference type="GO" id="GO:0051881">
    <property type="term" value="P:regulation of mitochondrial membrane potential"/>
    <property type="evidence" value="ECO:0007669"/>
    <property type="project" value="Ensembl"/>
</dbReference>
<dbReference type="GO" id="GO:0043523">
    <property type="term" value="P:regulation of neuron apoptotic process"/>
    <property type="evidence" value="ECO:0000315"/>
    <property type="project" value="BHF-UCL"/>
</dbReference>
<dbReference type="GO" id="GO:0002082">
    <property type="term" value="P:regulation of oxidative phosphorylation"/>
    <property type="evidence" value="ECO:0007669"/>
    <property type="project" value="Ensembl"/>
</dbReference>
<dbReference type="GO" id="GO:1903214">
    <property type="term" value="P:regulation of protein targeting to mitochondrion"/>
    <property type="evidence" value="ECO:0007669"/>
    <property type="project" value="Ensembl"/>
</dbReference>
<dbReference type="GO" id="GO:0031396">
    <property type="term" value="P:regulation of protein ubiquitination"/>
    <property type="evidence" value="ECO:0007669"/>
    <property type="project" value="Ensembl"/>
</dbReference>
<dbReference type="GO" id="GO:0043254">
    <property type="term" value="P:regulation of protein-containing complex assembly"/>
    <property type="evidence" value="ECO:0007669"/>
    <property type="project" value="Ensembl"/>
</dbReference>
<dbReference type="GO" id="GO:0022904">
    <property type="term" value="P:respiratory electron transport chain"/>
    <property type="evidence" value="ECO:0000315"/>
    <property type="project" value="ParkinsonsUK-UCL"/>
</dbReference>
<dbReference type="GO" id="GO:0002931">
    <property type="term" value="P:response to ischemia"/>
    <property type="evidence" value="ECO:0007669"/>
    <property type="project" value="Ensembl"/>
</dbReference>
<dbReference type="GO" id="GO:0038203">
    <property type="term" value="P:TORC2 signaling"/>
    <property type="evidence" value="ECO:0007669"/>
    <property type="project" value="Ensembl"/>
</dbReference>
<dbReference type="CDD" id="cd14018">
    <property type="entry name" value="STKc_PINK1"/>
    <property type="match status" value="1"/>
</dbReference>
<dbReference type="FunFam" id="1.10.510.10:FF:000418">
    <property type="entry name" value="PTEN induced kinase 1"/>
    <property type="match status" value="1"/>
</dbReference>
<dbReference type="Gene3D" id="1.10.510.10">
    <property type="entry name" value="Transferase(Phosphotransferase) domain 1"/>
    <property type="match status" value="1"/>
</dbReference>
<dbReference type="InterPro" id="IPR011009">
    <property type="entry name" value="Kinase-like_dom_sf"/>
</dbReference>
<dbReference type="InterPro" id="IPR051511">
    <property type="entry name" value="MitoQC_Scaffold_Kinases"/>
</dbReference>
<dbReference type="InterPro" id="IPR040110">
    <property type="entry name" value="PINK1_STKc"/>
</dbReference>
<dbReference type="InterPro" id="IPR000719">
    <property type="entry name" value="Prot_kinase_dom"/>
</dbReference>
<dbReference type="InterPro" id="IPR017441">
    <property type="entry name" value="Protein_kinase_ATP_BS"/>
</dbReference>
<dbReference type="InterPro" id="IPR008271">
    <property type="entry name" value="Ser/Thr_kinase_AS"/>
</dbReference>
<dbReference type="PANTHER" id="PTHR22972">
    <property type="entry name" value="SERINE/THREONINE PROTEIN KINASE"/>
    <property type="match status" value="1"/>
</dbReference>
<dbReference type="PANTHER" id="PTHR22972:SF7">
    <property type="entry name" value="SERINE_THREONINE-PROTEIN KINASE PINK1, MITOCHONDRIAL"/>
    <property type="match status" value="1"/>
</dbReference>
<dbReference type="Pfam" id="PF00069">
    <property type="entry name" value="Pkinase"/>
    <property type="match status" value="1"/>
</dbReference>
<dbReference type="SMART" id="SM00220">
    <property type="entry name" value="S_TKc"/>
    <property type="match status" value="1"/>
</dbReference>
<dbReference type="SUPFAM" id="SSF56112">
    <property type="entry name" value="Protein kinase-like (PK-like)"/>
    <property type="match status" value="1"/>
</dbReference>
<dbReference type="PROSITE" id="PS00107">
    <property type="entry name" value="PROTEIN_KINASE_ATP"/>
    <property type="match status" value="1"/>
</dbReference>
<dbReference type="PROSITE" id="PS50011">
    <property type="entry name" value="PROTEIN_KINASE_DOM"/>
    <property type="match status" value="1"/>
</dbReference>
<dbReference type="PROSITE" id="PS00108">
    <property type="entry name" value="PROTEIN_KINASE_ST"/>
    <property type="match status" value="1"/>
</dbReference>
<keyword id="KW-0067">ATP-binding</keyword>
<keyword id="KW-0072">Autophagy</keyword>
<keyword id="KW-0963">Cytoplasm</keyword>
<keyword id="KW-0418">Kinase</keyword>
<keyword id="KW-0460">Magnesium</keyword>
<keyword id="KW-0472">Membrane</keyword>
<keyword id="KW-0479">Metal-binding</keyword>
<keyword id="KW-0496">Mitochondrion</keyword>
<keyword id="KW-0999">Mitochondrion inner membrane</keyword>
<keyword id="KW-1000">Mitochondrion outer membrane</keyword>
<keyword id="KW-0547">Nucleotide-binding</keyword>
<keyword id="KW-0597">Phosphoprotein</keyword>
<keyword id="KW-1185">Reference proteome</keyword>
<keyword id="KW-0723">Serine/threonine-protein kinase</keyword>
<keyword id="KW-0808">Transferase</keyword>
<keyword id="KW-0809">Transit peptide</keyword>
<keyword id="KW-0812">Transmembrane</keyword>
<keyword id="KW-1133">Transmembrane helix</keyword>
<reference evidence="20" key="1">
    <citation type="journal article" date="2001" name="Oncogene">
        <title>Growth-suppressive effects of BPOZ and EGR2, two genes involved in the PTEN signaling pathway.</title>
        <authorList>
            <person name="Unoki M."/>
            <person name="Nakamura Y."/>
        </authorList>
    </citation>
    <scope>NUCLEOTIDE SEQUENCE [MRNA]</scope>
    <source>
        <strain evidence="20">C57BL/6J</strain>
        <tissue evidence="20">Lung</tissue>
    </source>
</reference>
<reference evidence="16" key="2">
    <citation type="journal article" date="2003" name="Cancer Lett.">
        <title>BRPK, a novel protein kinase showing increased expression in mouse cancer cell lines with higher metastatic potential.</title>
        <authorList>
            <person name="Nakajima A."/>
            <person name="Kataoka K."/>
            <person name="Hong M."/>
            <person name="Sakaguchi M."/>
            <person name="Huh N.-H."/>
        </authorList>
    </citation>
    <scope>NUCLEOTIDE SEQUENCE [MRNA]</scope>
    <scope>TISSUE SPECIFICITY</scope>
    <source>
        <strain evidence="19">ICR</strain>
        <tissue evidence="19">Testis</tissue>
    </source>
</reference>
<reference key="3">
    <citation type="journal article" date="2009" name="PLoS Biol.">
        <title>Lineage-specific biology revealed by a finished genome assembly of the mouse.</title>
        <authorList>
            <person name="Church D.M."/>
            <person name="Goodstadt L."/>
            <person name="Hillier L.W."/>
            <person name="Zody M.C."/>
            <person name="Goldstein S."/>
            <person name="She X."/>
            <person name="Bult C.J."/>
            <person name="Agarwala R."/>
            <person name="Cherry J.L."/>
            <person name="DiCuccio M."/>
            <person name="Hlavina W."/>
            <person name="Kapustin Y."/>
            <person name="Meric P."/>
            <person name="Maglott D."/>
            <person name="Birtle Z."/>
            <person name="Marques A.C."/>
            <person name="Graves T."/>
            <person name="Zhou S."/>
            <person name="Teague B."/>
            <person name="Potamousis K."/>
            <person name="Churas C."/>
            <person name="Place M."/>
            <person name="Herschleb J."/>
            <person name="Runnheim R."/>
            <person name="Forrest D."/>
            <person name="Amos-Landgraf J."/>
            <person name="Schwartz D.C."/>
            <person name="Cheng Z."/>
            <person name="Lindblad-Toh K."/>
            <person name="Eichler E.E."/>
            <person name="Ponting C.P."/>
        </authorList>
    </citation>
    <scope>NUCLEOTIDE SEQUENCE [LARGE SCALE GENOMIC DNA]</scope>
    <source>
        <strain>C57BL/6J</strain>
    </source>
</reference>
<reference evidence="16" key="4">
    <citation type="journal article" date="2004" name="Genome Res.">
        <title>The status, quality, and expansion of the NIH full-length cDNA project: the Mammalian Gene Collection (MGC).</title>
        <authorList>
            <consortium name="The MGC Project Team"/>
        </authorList>
    </citation>
    <scope>NUCLEOTIDE SEQUENCE [LARGE SCALE MRNA]</scope>
    <source>
        <strain evidence="18">C57BL/6J</strain>
        <strain evidence="17">Czech II</strain>
        <tissue evidence="18">Eye</tissue>
        <tissue evidence="17">Mammary gland</tissue>
    </source>
</reference>
<reference key="5">
    <citation type="journal article" date="2008" name="Proc. Natl. Acad. Sci. U.S.A.">
        <title>Loss of PINK1 causes mitochondrial functional defects and increased sensitivity to oxidative stress.</title>
        <authorList>
            <person name="Gautier C.A."/>
            <person name="Kitada T."/>
            <person name="Shen J."/>
        </authorList>
    </citation>
    <scope>DISRUPTION PHENOTYPE</scope>
</reference>
<reference key="6">
    <citation type="journal article" date="2009" name="EMBO Mol. Med.">
        <title>Parkinson's disease mutations in PINK1 result in decreased Complex I activity and deficient synaptic function.</title>
        <authorList>
            <person name="Morais V.A."/>
            <person name="Verstreken P."/>
            <person name="Roethig A."/>
            <person name="Smet J."/>
            <person name="Snellinx A."/>
            <person name="Vanbrabant M."/>
            <person name="Haddad D."/>
            <person name="Frezza C."/>
            <person name="Mandemakers W."/>
            <person name="Vogt-Weisenhorn D."/>
            <person name="Van Coster R."/>
            <person name="Wurst W."/>
            <person name="Scorrano L."/>
            <person name="De Strooper B."/>
        </authorList>
    </citation>
    <scope>DISRUPTION PHENOTYPE</scope>
</reference>
<reference key="7">
    <citation type="journal article" date="2009" name="J. Clin. Invest.">
        <title>Parkin, PINK1, and DJ-1 form a ubiquitin E3 ligase complex promoting unfolded protein degradation.</title>
        <authorList>
            <person name="Xiong H."/>
            <person name="Wang D."/>
            <person name="Chen L."/>
            <person name="Choo Y.S."/>
            <person name="Ma H."/>
            <person name="Tang C."/>
            <person name="Xia K."/>
            <person name="Jiang W."/>
            <person name="Ronai Z."/>
            <person name="Zhuang X."/>
            <person name="Zhang Z."/>
        </authorList>
    </citation>
    <scope>SUBUNIT</scope>
</reference>
<reference key="8">
    <citation type="journal article" date="2014" name="Nature">
        <title>Ubiquitin is phosphorylated by PINK1 to activate parkin.</title>
        <authorList>
            <person name="Koyano F."/>
            <person name="Okatsu K."/>
            <person name="Kosako H."/>
            <person name="Tamura Y."/>
            <person name="Go E."/>
            <person name="Kimura M."/>
            <person name="Kimura Y."/>
            <person name="Tsuchiya H."/>
            <person name="Yoshihara H."/>
            <person name="Hirokawa T."/>
            <person name="Endo T."/>
            <person name="Fon E.A."/>
            <person name="Trempe J.F."/>
            <person name="Saeki Y."/>
            <person name="Tanaka K."/>
            <person name="Matsuda N."/>
        </authorList>
    </citation>
    <scope>FUNCTION</scope>
</reference>
<reference key="9">
    <citation type="journal article" date="2014" name="PLoS Genet.">
        <title>Phosphorylation of mitochondrial polyubiquitin by PINK1 promotes Parkin mitochondrial tethering.</title>
        <authorList>
            <person name="Shiba-Fukushima K."/>
            <person name="Arano T."/>
            <person name="Matsumoto G."/>
            <person name="Inoshita T."/>
            <person name="Yoshida S."/>
            <person name="Ishihama Y."/>
            <person name="Ryu K.Y."/>
            <person name="Nukina N."/>
            <person name="Hattori N."/>
            <person name="Imai Y."/>
        </authorList>
    </citation>
    <scope>FUNCTION</scope>
    <scope>CATALYTIC ACTIVITY</scope>
    <scope>PHOSPHORYLATION</scope>
    <scope>MUTAGENESIS OF LYS-218; ASP-361 AND ASP-383</scope>
</reference>
<reference key="10">
    <citation type="journal article" date="2014" name="Science">
        <title>PINK1 loss-of-function mutations affect mitochondrial complex I activity via NdufA10 ubiquinone uncoupling.</title>
        <authorList>
            <person name="Morais V.A."/>
            <person name="Haddad D."/>
            <person name="Craessaerts K."/>
            <person name="De Bock P.J."/>
            <person name="Swerts J."/>
            <person name="Vilain S."/>
            <person name="Aerts L."/>
            <person name="Overbergh L."/>
            <person name="Gruenewald A."/>
            <person name="Seibler P."/>
            <person name="Klein C."/>
            <person name="Gevaert K."/>
            <person name="Verstreken P."/>
            <person name="De Strooper B."/>
        </authorList>
    </citation>
    <scope>FUNCTION</scope>
    <scope>CATALYTIC ACTIVITY</scope>
    <scope>SUBCELLULAR LOCATION</scope>
</reference>
<reference key="11">
    <citation type="journal article" date="2017" name="Nat. Commun.">
        <title>PINK1-mediated phosphorylation of LETM1 regulates mitochondrial calcium transport and protects neurons against mitochondrial stress.</title>
        <authorList>
            <person name="Huang E."/>
            <person name="Qu D."/>
            <person name="Huang T."/>
            <person name="Rizzi N."/>
            <person name="Boonying W."/>
            <person name="Krolak D."/>
            <person name="Ciana P."/>
            <person name="Woulfe J."/>
            <person name="Klein C."/>
            <person name="Slack R.S."/>
            <person name="Figeys D."/>
            <person name="Park D.S."/>
        </authorList>
    </citation>
    <scope>FUNCTION</scope>
    <scope>CATALYTIC ACTIVITY</scope>
</reference>
<reference key="12">
    <citation type="journal article" date="2019" name="IScience">
        <title>Rewiring of the Human Mitochondrial Interactome during Neuronal Reprogramming Reveals Regulators of the Respirasome and Neurogenesis.</title>
        <authorList>
            <person name="Moutaoufik M.T."/>
            <person name="Malty R."/>
            <person name="Amin S."/>
            <person name="Zhang Q."/>
            <person name="Phanse S."/>
            <person name="Gagarinova A."/>
            <person name="Zilocchi M."/>
            <person name="Hoell L."/>
            <person name="Minic Z."/>
            <person name="Gagarinova M."/>
            <person name="Aoki H."/>
            <person name="Stockwell J."/>
            <person name="Jessulat M."/>
            <person name="Goebels F."/>
            <person name="Broderick K."/>
            <person name="Scott N.E."/>
            <person name="Vlasblom J."/>
            <person name="Musso G."/>
            <person name="Prasad B."/>
            <person name="Lamantea E."/>
            <person name="Garavaglia B."/>
            <person name="Rajput A."/>
            <person name="Murayama K."/>
            <person name="Okazaki Y."/>
            <person name="Foster L.J."/>
            <person name="Bader G.D."/>
            <person name="Cayabyab F.S."/>
            <person name="Babu M."/>
        </authorList>
    </citation>
    <scope>INTERACTION WITH NENF</scope>
    <scope>SUBCELLULAR LOCATION</scope>
</reference>
<reference key="13">
    <citation type="journal article" date="2020" name="EMBO Rep.">
        <title>PINK1 phosphorylates Drp1S616 to regulate mitophagy-independent mitochondrial dynamics.</title>
        <authorList>
            <person name="Han H."/>
            <person name="Tan J."/>
            <person name="Wang R."/>
            <person name="Wan H."/>
            <person name="He Y."/>
            <person name="Yan X."/>
            <person name="Guo J."/>
            <person name="Gao Q."/>
            <person name="Li J."/>
            <person name="Shang S."/>
            <person name="Chen F."/>
            <person name="Tian R."/>
            <person name="Liu W."/>
            <person name="Liao L."/>
            <person name="Tang B."/>
            <person name="Zhang Z."/>
        </authorList>
    </citation>
    <scope>FUNCTION</scope>
    <scope>CATALYTIC ACTIVITY</scope>
    <scope>DISRUPTION PHENOTYPE</scope>
</reference>
<comment type="function">
    <text evidence="2 10 11 12 13 15">Serine/threonine-protein kinase which acts as a sensor of mitochondrial damage and protects against mitochondrial dysfunction during cellular stress. It phosphorylates mitochondrial proteins to coordinate mitochondrial quality control mechanisms that remove and replace dysfunctional mitochondrial components (PubMed:24652937, PubMed:24784582, PubMed:25474007, PubMed:32484300). Depending on the severity of mitochondrial damage, activity ranges from preventing apoptosis and stimulating mitochondrial biogenesis to eliminating severely damaged mitochondria via PINK1-PRKN-dependent mitophagy (By similarity). When cellular stress results in irreversible mitochondrial damage, PINK1 accumulates at the outer mitochondrial membrane (OMM) where it phosphorylates pre-existing polyubiquitin chains at 'Ser-65', recruits PRKN from the cytosol to the OMM and activates PRKN by phosphorylation at 'Ser-65' (PubMed:24652937, PubMed:24784582, PubMed:25474007, PubMed:32484300). Activated PRKN then ubiquinates VDAC1 and other OMM proteins to initiate mitophagy (By similarity). The PINK1-PRKN pathway also promotes fission of damaged mitochondria by phosphorylating and thus promoting the PRKN-dependent degradation of mitochondrial proteins involved in fission such as MFN2 (By similarity). This prevents the refusion of unhealthy mitochondria with the mitochondrial network or initiates mitochondrial fragmentation facilitating their later engulfment by autophagosomes (By similarity). Also promotes mitochondrial fission independently of PRKN and ATG7-mediated mitophagy, via the phosphorylation and activation of DNM1L (PubMed:32484300). Regulates motility of damaged mitochondria by promoting the ubiquitination and subsequent degradation of MIRO1 and MIRO2; in motor neurons, this likely inhibits mitochondrial intracellular anterograde transport along the axons which probably increases the chance of the mitochondria undergoing mitophagy in the soma (By similarity). Required for ubiquinone reduction by mitochondrial complex I by mediating phosphorylation of complex I subunit NDUFA10 (PubMed:24652937). Phosphorylates LETM1, positively regulating its mitochondrial calcium transport activity (PubMed:29123128).</text>
</comment>
<comment type="catalytic activity">
    <reaction evidence="10 12 15">
        <text>L-seryl-[protein] + ATP = O-phospho-L-seryl-[protein] + ADP + H(+)</text>
        <dbReference type="Rhea" id="RHEA:17989"/>
        <dbReference type="Rhea" id="RHEA-COMP:9863"/>
        <dbReference type="Rhea" id="RHEA-COMP:11604"/>
        <dbReference type="ChEBI" id="CHEBI:15378"/>
        <dbReference type="ChEBI" id="CHEBI:29999"/>
        <dbReference type="ChEBI" id="CHEBI:30616"/>
        <dbReference type="ChEBI" id="CHEBI:83421"/>
        <dbReference type="ChEBI" id="CHEBI:456216"/>
        <dbReference type="EC" id="2.7.11.1"/>
    </reaction>
</comment>
<comment type="catalytic activity">
    <reaction evidence="10 12 13 15">
        <text>L-threonyl-[protein] + ATP = O-phospho-L-threonyl-[protein] + ADP + H(+)</text>
        <dbReference type="Rhea" id="RHEA:46608"/>
        <dbReference type="Rhea" id="RHEA-COMP:11060"/>
        <dbReference type="Rhea" id="RHEA-COMP:11605"/>
        <dbReference type="ChEBI" id="CHEBI:15378"/>
        <dbReference type="ChEBI" id="CHEBI:30013"/>
        <dbReference type="ChEBI" id="CHEBI:30616"/>
        <dbReference type="ChEBI" id="CHEBI:61977"/>
        <dbReference type="ChEBI" id="CHEBI:456216"/>
        <dbReference type="EC" id="2.7.11.1"/>
    </reaction>
</comment>
<comment type="cofactor">
    <cofactor>
        <name>Mg(2+)</name>
        <dbReference type="ChEBI" id="CHEBI:18420"/>
    </cofactor>
</comment>
<comment type="subunit">
    <text evidence="2 8 14">Upon mitochondrial depolarization, it forms a supercomplex with TOM and TIM23 complexes (By similarity). PINK1-TOM-TIM23 supercomplex formation requires PINK1 interaction with TOMM20 and TOMM70 and is critical for PINK1 stabilization at the outer mitochondrial membrane, kinase activation and downstream mitophagy (By similarity). Upon mitochondrial depolarization, interacts with TIMM23; the interaction is required for PINK1 accumulation at the outer mitochondrial membrane, kinase activation by autophosphorylation and PRKN recruitement to mitochondria (By similarity). Interacts with PRKN (By similarity). Interacts with FBXO7 (By similarity). Forms a complex with PRKN and PARK7 (PubMed:19229105). Interacts with NENF (PubMed:31536960).</text>
</comment>
<comment type="subcellular location">
    <subcellularLocation>
        <location evidence="2">Mitochondrion outer membrane</location>
        <topology evidence="3">Single-pass membrane protein</topology>
    </subcellularLocation>
    <subcellularLocation>
        <location evidence="10">Mitochondrion inner membrane</location>
        <topology evidence="3">Single-pass membrane protein</topology>
    </subcellularLocation>
    <subcellularLocation>
        <location evidence="2">Cytoplasm</location>
        <location evidence="2">Cytosol</location>
    </subcellularLocation>
    <text evidence="2">Localizes mostly in mitochondrion and the two smaller proteolytic processed fragments localize mainly in cytosol. When mitochondria lose mitochondrial membrane potential following damage, PINK1 import is arrested, which induces its accumulation in the outer mitochondrial membrane, where it acquires kinase activity.</text>
</comment>
<comment type="tissue specificity">
    <text evidence="6">High levels expressed in testis, lower levels in brain, heart, lung, liver and kidney.</text>
</comment>
<comment type="PTM">
    <text evidence="2">Proteolytically cleaved. In healthy cells, the precursor is continuously imported into the inner mitochondrial membrane (IMM), where it is proteolytically cleaved by mitochondrial-processing peptidase (MPP) and then undergoes further proteolytic cleavage by PARL or AFG3L2 to give rise to the 52 kDa short form. The 52 kDa short form is then released into the cytosol where it rapidly undergoes proteasome-dependent degradation. In unhealthy cells, when cellular stress conditions lead to the loss of mitochondrial membrane potential, mitochondrial import is impaired leading to the precursor accumulating on the outer mitochondrial membrane (OMM). If accumulation at the OMM fails and it is imported into the depolarized mitochondria, it undergoes cleavage by the IMM protease OMA1, promoting its subsequent degradation by the proteasome.</text>
</comment>
<comment type="PTM">
    <text evidence="2 12">Autophosphorylated (PubMed:25474007). Loss of mitochondrial membrane potential results in the precursor accumulating on the outer mitochondrial membrane (OMM) where it is activated by autophosphorylation (By similarity). Autophosphorylation at Ser-227 and Ser-401 is essential for selective recruitment of PRKN to depolarized mitochondria, via PINK1-dependent phosphorylation of ubiquitin and PRKN (By similarity).</text>
</comment>
<comment type="disruption phenotype">
    <text evidence="7 9 15">Mitochondrial dysfunction (PubMed:18687901, PubMed:20049710, PubMed:32484300). Mice do not show gross structural defects in mitochondria, although the number of larger mitochondria is selectively increased (PubMed:18687901, PubMed:32484300). Mitochondrial respiration is impaired in the striatum, which is rich in dopaminergic terminals, but not in the cerebral cortex in young mice (PubMed:18687901). Mitochondrial respiration activities in the cerebral cortex are decreased in 2 years old mice (PubMed:18687901). Mice show defects in mitochondrial complex I and a decrease in mitochondrial membrane potential (PubMed:20049710). Decreased phosphorylation of Dnm1l in embryonic fibroblasts and in the substantial nigra of 18 month old mice (PubMed:32484300).</text>
</comment>
<comment type="similarity">
    <text evidence="4">Belongs to the protein kinase superfamily. Ser/Thr protein kinase family.</text>
</comment>
<evidence type="ECO:0000250" key="1">
    <source>
        <dbReference type="UniProtKB" id="Q02750"/>
    </source>
</evidence>
<evidence type="ECO:0000250" key="2">
    <source>
        <dbReference type="UniProtKB" id="Q9BXM7"/>
    </source>
</evidence>
<evidence type="ECO:0000255" key="3"/>
<evidence type="ECO:0000255" key="4">
    <source>
        <dbReference type="PROSITE-ProRule" id="PRU00159"/>
    </source>
</evidence>
<evidence type="ECO:0000255" key="5">
    <source>
        <dbReference type="PROSITE-ProRule" id="PRU10027"/>
    </source>
</evidence>
<evidence type="ECO:0000269" key="6">
    <source>
    </source>
</evidence>
<evidence type="ECO:0000269" key="7">
    <source>
    </source>
</evidence>
<evidence type="ECO:0000269" key="8">
    <source>
    </source>
</evidence>
<evidence type="ECO:0000269" key="9">
    <source>
    </source>
</evidence>
<evidence type="ECO:0000269" key="10">
    <source>
    </source>
</evidence>
<evidence type="ECO:0000269" key="11">
    <source>
    </source>
</evidence>
<evidence type="ECO:0000269" key="12">
    <source>
    </source>
</evidence>
<evidence type="ECO:0000269" key="13">
    <source>
    </source>
</evidence>
<evidence type="ECO:0000269" key="14">
    <source>
    </source>
</evidence>
<evidence type="ECO:0000269" key="15">
    <source>
    </source>
</evidence>
<evidence type="ECO:0000305" key="16"/>
<evidence type="ECO:0000312" key="17">
    <source>
        <dbReference type="EMBL" id="AAH44743.1"/>
    </source>
</evidence>
<evidence type="ECO:0000312" key="18">
    <source>
        <dbReference type="EMBL" id="AAH67066.1"/>
    </source>
</evidence>
<evidence type="ECO:0000312" key="19">
    <source>
        <dbReference type="EMBL" id="AAK28061.1"/>
    </source>
</evidence>
<evidence type="ECO:0000312" key="20">
    <source>
        <dbReference type="EMBL" id="BAB55651.1"/>
    </source>
</evidence>
<name>PINK1_MOUSE</name>
<gene>
    <name type="primary">Pink1</name>
</gene>
<accession>Q99MQ3</accession>
<accession>A2AM77</accession>
<accession>Q7TMZ3</accession>
<accession>Q811I8</accession>
<accession>Q91XU5</accession>
<organism evidence="19">
    <name type="scientific">Mus musculus</name>
    <name type="common">Mouse</name>
    <dbReference type="NCBI Taxonomy" id="10090"/>
    <lineage>
        <taxon>Eukaryota</taxon>
        <taxon>Metazoa</taxon>
        <taxon>Chordata</taxon>
        <taxon>Craniata</taxon>
        <taxon>Vertebrata</taxon>
        <taxon>Euteleostomi</taxon>
        <taxon>Mammalia</taxon>
        <taxon>Eutheria</taxon>
        <taxon>Euarchontoglires</taxon>
        <taxon>Glires</taxon>
        <taxon>Rodentia</taxon>
        <taxon>Myomorpha</taxon>
        <taxon>Muroidea</taxon>
        <taxon>Muridae</taxon>
        <taxon>Murinae</taxon>
        <taxon>Mus</taxon>
        <taxon>Mus</taxon>
    </lineage>
</organism>
<sequence length="580" mass="63181">MAVRQALGRGLQLGRALLLRFAPKPGPLFGWGKPGPAAAWGRGERPGQVVSPGAQPRPVGLPLPDRYRFFRQSVAGLAARIQRQFMVRARGGAGPCGRAVFLAFGLGLGLIEEKQAEGRRAASACQEIQAIFTQKTKRVSDPLDTRCWQGFRLEDYLIGQAIGKGCNAAVYEATMPTLPQHLEKAKHLGLIGKGPDVVLKGADGEQAPGTPTFPFAIKMMWNISAGSSSEAILSKMSQELVPASRVALAGEYGAVTYRRSRDGPKQLAPHPNIIRVFRAFTSSVPLLPGALADYPDMLPPHYYPEGLGHGRTLFLVMKNYPCTLRQYLEEQTPSSRLATMMTLQLLEGVDHLVQQGIAHRDLKSDNILVEWDSDGCPWLVISDFGCCLADQHVGLRLPFNSSSVERGGNGSLMAPEVSTAHSGPSAVIDYSKADTWAVGAIAYEIFGLANPFYGQGSAHLESRSYQEAQLPEMPESVPPEARRLVRSLLQREASKRPSARLAANVLHLSLWGEHLLALKNLKLDKMIAWLLQQSAATLLADRLREKSCVETKLQMLFLANLECEALCQAALLLSSWRAAP</sequence>
<feature type="transit peptide" description="Mitochondrion" evidence="3">
    <location>
        <begin position="1"/>
        <end position="77"/>
    </location>
</feature>
<feature type="chain" id="PRO_0000024370" description="Serine/threonine-protein kinase PINK1, mitochondrial">
    <location>
        <begin position="78"/>
        <end position="580"/>
    </location>
</feature>
<feature type="topological domain" description="Mitochondrial intermembrane" evidence="3">
    <location>
        <begin position="78"/>
        <end position="93"/>
    </location>
</feature>
<feature type="transmembrane region" description="Helical" evidence="3">
    <location>
        <begin position="94"/>
        <end position="110"/>
    </location>
</feature>
<feature type="topological domain" description="Cytoplasmic" evidence="3">
    <location>
        <begin position="111"/>
        <end position="580"/>
    </location>
</feature>
<feature type="domain" description="Protein kinase" evidence="4 16">
    <location>
        <begin position="156"/>
        <end position="510"/>
    </location>
</feature>
<feature type="region of interest" description="Required for outer membrane localization" evidence="2">
    <location>
        <begin position="111"/>
        <end position="117"/>
    </location>
</feature>
<feature type="active site" description="Proton acceptor" evidence="4 5">
    <location>
        <position position="361"/>
    </location>
</feature>
<feature type="binding site" evidence="1 4">
    <location>
        <begin position="162"/>
        <end position="170"/>
    </location>
    <ligand>
        <name>ATP</name>
        <dbReference type="ChEBI" id="CHEBI:30616"/>
    </ligand>
</feature>
<feature type="binding site" evidence="4">
    <location>
        <position position="186"/>
    </location>
    <ligand>
        <name>ATP</name>
        <dbReference type="ChEBI" id="CHEBI:30616"/>
    </ligand>
</feature>
<feature type="modified residue" description="Phosphoserine; by autocatalysis" evidence="2">
    <location>
        <position position="227"/>
    </location>
</feature>
<feature type="modified residue" description="Phosphoserine; by autocatalysis" evidence="2">
    <location>
        <position position="401"/>
    </location>
</feature>
<feature type="mutagenesis site" description="Abolishes ubiquitin phosphorylation; when associated with A-361 and A-383." evidence="12">
    <original>K</original>
    <variation>A</variation>
    <location>
        <position position="218"/>
    </location>
</feature>
<feature type="mutagenesis site" description="Abolishes ubiquitin phosphorylation; when associated with A-218 and A-383." evidence="12">
    <original>D</original>
    <variation>A</variation>
    <location>
        <position position="361"/>
    </location>
</feature>
<feature type="mutagenesis site" description="Abolishes ubiquitin phosphorylation; when associated with A-218 and A-361." evidence="12">
    <original>D</original>
    <variation>A</variation>
    <location>
        <position position="383"/>
    </location>
</feature>
<feature type="sequence conflict" description="In Ref. 1; BAB55651." evidence="16" ref="1">
    <original>R</original>
    <variation>P</variation>
    <location>
        <position position="9"/>
    </location>
</feature>
<feature type="sequence conflict" description="In Ref. 2; AAK28061." evidence="16" ref="2">
    <original>Q</original>
    <variation>R</variation>
    <location>
        <position position="48"/>
    </location>
</feature>
<feature type="sequence conflict" description="In Ref. 2; AAK28061." evidence="16" ref="2">
    <original>A</original>
    <variation>D</variation>
    <location>
        <position position="249"/>
    </location>
</feature>
<feature type="sequence conflict" description="In Ref. 4; AAH54349." evidence="16" ref="4">
    <original>S</original>
    <variation>G</variation>
    <location>
        <position position="425"/>
    </location>
</feature>
<feature type="sequence conflict" description="In Ref. 2; AAK28061." evidence="16" ref="2">
    <original>E</original>
    <variation>K</variation>
    <location>
        <position position="475"/>
    </location>
</feature>
<feature type="sequence conflict" description="In Ref. 4; AAH54349." evidence="16" ref="4">
    <original>S</original>
    <variation>L</variation>
    <location>
        <position position="476"/>
    </location>
</feature>
<proteinExistence type="evidence at protein level"/>